<protein>
    <recommendedName>
        <fullName evidence="2">Elongation factor Tu</fullName>
        <shortName evidence="2">EF-Tu</shortName>
        <ecNumber evidence="2">3.6.5.3</ecNumber>
    </recommendedName>
</protein>
<reference key="1">
    <citation type="journal article" date="2007" name="BMC Microbiol.">
        <title>Subtle genetic changes enhance virulence of methicillin resistant and sensitive Staphylococcus aureus.</title>
        <authorList>
            <person name="Highlander S.K."/>
            <person name="Hulten K.G."/>
            <person name="Qin X."/>
            <person name="Jiang H."/>
            <person name="Yerrapragada S."/>
            <person name="Mason E.O. Jr."/>
            <person name="Shang Y."/>
            <person name="Williams T.M."/>
            <person name="Fortunov R.M."/>
            <person name="Liu Y."/>
            <person name="Igboeli O."/>
            <person name="Petrosino J."/>
            <person name="Tirumalai M."/>
            <person name="Uzman A."/>
            <person name="Fox G.E."/>
            <person name="Cardenas A.M."/>
            <person name="Muzny D.M."/>
            <person name="Hemphill L."/>
            <person name="Ding Y."/>
            <person name="Dugan S."/>
            <person name="Blyth P.R."/>
            <person name="Buhay C.J."/>
            <person name="Dinh H.H."/>
            <person name="Hawes A.C."/>
            <person name="Holder M."/>
            <person name="Kovar C.L."/>
            <person name="Lee S.L."/>
            <person name="Liu W."/>
            <person name="Nazareth L.V."/>
            <person name="Wang Q."/>
            <person name="Zhou J."/>
            <person name="Kaplan S.L."/>
            <person name="Weinstock G.M."/>
        </authorList>
    </citation>
    <scope>NUCLEOTIDE SEQUENCE [LARGE SCALE GENOMIC DNA]</scope>
    <source>
        <strain>USA300 / TCH1516</strain>
    </source>
</reference>
<accession>A8YZP5</accession>
<comment type="function">
    <text evidence="2">GTP hydrolase that promotes the GTP-dependent binding of aminoacyl-tRNA to the A-site of ribosomes during protein biosynthesis.</text>
</comment>
<comment type="catalytic activity">
    <reaction evidence="2">
        <text>GTP + H2O = GDP + phosphate + H(+)</text>
        <dbReference type="Rhea" id="RHEA:19669"/>
        <dbReference type="ChEBI" id="CHEBI:15377"/>
        <dbReference type="ChEBI" id="CHEBI:15378"/>
        <dbReference type="ChEBI" id="CHEBI:37565"/>
        <dbReference type="ChEBI" id="CHEBI:43474"/>
        <dbReference type="ChEBI" id="CHEBI:58189"/>
        <dbReference type="EC" id="3.6.5.3"/>
    </reaction>
    <physiologicalReaction direction="left-to-right" evidence="2">
        <dbReference type="Rhea" id="RHEA:19670"/>
    </physiologicalReaction>
</comment>
<comment type="subunit">
    <text evidence="2">Monomer.</text>
</comment>
<comment type="subcellular location">
    <subcellularLocation>
        <location evidence="2">Cytoplasm</location>
    </subcellularLocation>
</comment>
<comment type="similarity">
    <text evidence="2">Belongs to the TRAFAC class translation factor GTPase superfamily. Classic translation factor GTPase family. EF-Tu/EF-1A subfamily.</text>
</comment>
<organism>
    <name type="scientific">Staphylococcus aureus (strain USA300 / TCH1516)</name>
    <dbReference type="NCBI Taxonomy" id="451516"/>
    <lineage>
        <taxon>Bacteria</taxon>
        <taxon>Bacillati</taxon>
        <taxon>Bacillota</taxon>
        <taxon>Bacilli</taxon>
        <taxon>Bacillales</taxon>
        <taxon>Staphylococcaceae</taxon>
        <taxon>Staphylococcus</taxon>
    </lineage>
</organism>
<name>EFTU_STAAT</name>
<proteinExistence type="inferred from homology"/>
<gene>
    <name evidence="2" type="primary">tuf</name>
    <name type="ordered locus">USA300HOU_0541</name>
</gene>
<keyword id="KW-0963">Cytoplasm</keyword>
<keyword id="KW-0251">Elongation factor</keyword>
<keyword id="KW-0342">GTP-binding</keyword>
<keyword id="KW-0378">Hydrolase</keyword>
<keyword id="KW-0460">Magnesium</keyword>
<keyword id="KW-0479">Metal-binding</keyword>
<keyword id="KW-0547">Nucleotide-binding</keyword>
<keyword id="KW-0648">Protein biosynthesis</keyword>
<evidence type="ECO:0000250" key="1"/>
<evidence type="ECO:0000255" key="2">
    <source>
        <dbReference type="HAMAP-Rule" id="MF_00118"/>
    </source>
</evidence>
<sequence>MAKEKFDRSKEHANIGTIGHVDHGKTTLTAAIATVLAKNGDSVAQSYDMIDNAPEEKERGITINTSHIEYQTDKRHYAHVDCPGHADYVKNMITGAAQMDGGILVVSAADGPMPQTREHILLSRNVGVPALVVFLNKVDMVDDEELLELVEMEVRDLLSEYDFPGDDVPVIAGSALKALEGDAQYEEKILELMEAVDTYIPTPERDSDKPFMMPVEDVFSITGRGTVATGRVERGQIKVGEEVEIIGLHDTSKTTVTGVEMFRKLLDYAEAGDNIGALLRGVAREDVQRGQVLAAPGSITPHTEFKAEVYVLSKDEGGRHTPFFSNYRPQFYFRTTDVTGVVHLPEGTEMVMPGDNVEMTVELIAPIAIEDGTRFSIREGGRTVGSGVVTEIIK</sequence>
<feature type="chain" id="PRO_1000076114" description="Elongation factor Tu">
    <location>
        <begin position="1"/>
        <end position="394"/>
    </location>
</feature>
<feature type="domain" description="tr-type G">
    <location>
        <begin position="10"/>
        <end position="204"/>
    </location>
</feature>
<feature type="region of interest" description="G1" evidence="1">
    <location>
        <begin position="19"/>
        <end position="26"/>
    </location>
</feature>
<feature type="region of interest" description="G2" evidence="1">
    <location>
        <begin position="60"/>
        <end position="64"/>
    </location>
</feature>
<feature type="region of interest" description="G3" evidence="1">
    <location>
        <begin position="81"/>
        <end position="84"/>
    </location>
</feature>
<feature type="region of interest" description="G4" evidence="1">
    <location>
        <begin position="136"/>
        <end position="139"/>
    </location>
</feature>
<feature type="region of interest" description="G5" evidence="1">
    <location>
        <begin position="174"/>
        <end position="176"/>
    </location>
</feature>
<feature type="binding site" evidence="2">
    <location>
        <begin position="19"/>
        <end position="26"/>
    </location>
    <ligand>
        <name>GTP</name>
        <dbReference type="ChEBI" id="CHEBI:37565"/>
    </ligand>
</feature>
<feature type="binding site" evidence="2">
    <location>
        <position position="26"/>
    </location>
    <ligand>
        <name>Mg(2+)</name>
        <dbReference type="ChEBI" id="CHEBI:18420"/>
    </ligand>
</feature>
<feature type="binding site" evidence="2">
    <location>
        <begin position="81"/>
        <end position="85"/>
    </location>
    <ligand>
        <name>GTP</name>
        <dbReference type="ChEBI" id="CHEBI:37565"/>
    </ligand>
</feature>
<feature type="binding site" evidence="2">
    <location>
        <begin position="136"/>
        <end position="139"/>
    </location>
    <ligand>
        <name>GTP</name>
        <dbReference type="ChEBI" id="CHEBI:37565"/>
    </ligand>
</feature>
<dbReference type="EC" id="3.6.5.3" evidence="2"/>
<dbReference type="EMBL" id="CP000730">
    <property type="protein sequence ID" value="ABX28567.1"/>
    <property type="molecule type" value="Genomic_DNA"/>
</dbReference>
<dbReference type="RefSeq" id="WP_001040568.1">
    <property type="nucleotide sequence ID" value="NC_010079.1"/>
</dbReference>
<dbReference type="SMR" id="A8YZP5"/>
<dbReference type="KEGG" id="sax:USA300HOU_0541"/>
<dbReference type="HOGENOM" id="CLU_007265_0_0_9"/>
<dbReference type="GO" id="GO:0005829">
    <property type="term" value="C:cytosol"/>
    <property type="evidence" value="ECO:0007669"/>
    <property type="project" value="TreeGrafter"/>
</dbReference>
<dbReference type="GO" id="GO:0005525">
    <property type="term" value="F:GTP binding"/>
    <property type="evidence" value="ECO:0007669"/>
    <property type="project" value="UniProtKB-UniRule"/>
</dbReference>
<dbReference type="GO" id="GO:0003924">
    <property type="term" value="F:GTPase activity"/>
    <property type="evidence" value="ECO:0007669"/>
    <property type="project" value="InterPro"/>
</dbReference>
<dbReference type="GO" id="GO:0003746">
    <property type="term" value="F:translation elongation factor activity"/>
    <property type="evidence" value="ECO:0007669"/>
    <property type="project" value="UniProtKB-UniRule"/>
</dbReference>
<dbReference type="CDD" id="cd01884">
    <property type="entry name" value="EF_Tu"/>
    <property type="match status" value="1"/>
</dbReference>
<dbReference type="CDD" id="cd03697">
    <property type="entry name" value="EFTU_II"/>
    <property type="match status" value="1"/>
</dbReference>
<dbReference type="CDD" id="cd03707">
    <property type="entry name" value="EFTU_III"/>
    <property type="match status" value="1"/>
</dbReference>
<dbReference type="FunFam" id="2.40.30.10:FF:000001">
    <property type="entry name" value="Elongation factor Tu"/>
    <property type="match status" value="1"/>
</dbReference>
<dbReference type="FunFam" id="3.40.50.300:FF:000003">
    <property type="entry name" value="Elongation factor Tu"/>
    <property type="match status" value="1"/>
</dbReference>
<dbReference type="Gene3D" id="3.40.50.300">
    <property type="entry name" value="P-loop containing nucleotide triphosphate hydrolases"/>
    <property type="match status" value="1"/>
</dbReference>
<dbReference type="Gene3D" id="2.40.30.10">
    <property type="entry name" value="Translation factors"/>
    <property type="match status" value="2"/>
</dbReference>
<dbReference type="HAMAP" id="MF_00118_B">
    <property type="entry name" value="EF_Tu_B"/>
    <property type="match status" value="1"/>
</dbReference>
<dbReference type="InterPro" id="IPR041709">
    <property type="entry name" value="EF-Tu_GTP-bd"/>
</dbReference>
<dbReference type="InterPro" id="IPR050055">
    <property type="entry name" value="EF-Tu_GTPase"/>
</dbReference>
<dbReference type="InterPro" id="IPR004161">
    <property type="entry name" value="EFTu-like_2"/>
</dbReference>
<dbReference type="InterPro" id="IPR033720">
    <property type="entry name" value="EFTU_2"/>
</dbReference>
<dbReference type="InterPro" id="IPR031157">
    <property type="entry name" value="G_TR_CS"/>
</dbReference>
<dbReference type="InterPro" id="IPR027417">
    <property type="entry name" value="P-loop_NTPase"/>
</dbReference>
<dbReference type="InterPro" id="IPR005225">
    <property type="entry name" value="Small_GTP-bd"/>
</dbReference>
<dbReference type="InterPro" id="IPR000795">
    <property type="entry name" value="T_Tr_GTP-bd_dom"/>
</dbReference>
<dbReference type="InterPro" id="IPR009000">
    <property type="entry name" value="Transl_B-barrel_sf"/>
</dbReference>
<dbReference type="InterPro" id="IPR009001">
    <property type="entry name" value="Transl_elong_EF1A/Init_IF2_C"/>
</dbReference>
<dbReference type="InterPro" id="IPR004541">
    <property type="entry name" value="Transl_elong_EFTu/EF1A_bac/org"/>
</dbReference>
<dbReference type="InterPro" id="IPR004160">
    <property type="entry name" value="Transl_elong_EFTu/EF1A_C"/>
</dbReference>
<dbReference type="NCBIfam" id="TIGR00485">
    <property type="entry name" value="EF-Tu"/>
    <property type="match status" value="1"/>
</dbReference>
<dbReference type="NCBIfam" id="NF000766">
    <property type="entry name" value="PRK00049.1"/>
    <property type="match status" value="1"/>
</dbReference>
<dbReference type="NCBIfam" id="NF009372">
    <property type="entry name" value="PRK12735.1"/>
    <property type="match status" value="1"/>
</dbReference>
<dbReference type="NCBIfam" id="NF009373">
    <property type="entry name" value="PRK12736.1"/>
    <property type="match status" value="1"/>
</dbReference>
<dbReference type="NCBIfam" id="TIGR00231">
    <property type="entry name" value="small_GTP"/>
    <property type="match status" value="1"/>
</dbReference>
<dbReference type="PANTHER" id="PTHR43721:SF22">
    <property type="entry name" value="ELONGATION FACTOR TU, MITOCHONDRIAL"/>
    <property type="match status" value="1"/>
</dbReference>
<dbReference type="PANTHER" id="PTHR43721">
    <property type="entry name" value="ELONGATION FACTOR TU-RELATED"/>
    <property type="match status" value="1"/>
</dbReference>
<dbReference type="Pfam" id="PF00009">
    <property type="entry name" value="GTP_EFTU"/>
    <property type="match status" value="1"/>
</dbReference>
<dbReference type="Pfam" id="PF03144">
    <property type="entry name" value="GTP_EFTU_D2"/>
    <property type="match status" value="1"/>
</dbReference>
<dbReference type="Pfam" id="PF03143">
    <property type="entry name" value="GTP_EFTU_D3"/>
    <property type="match status" value="1"/>
</dbReference>
<dbReference type="PRINTS" id="PR00315">
    <property type="entry name" value="ELONGATNFCT"/>
</dbReference>
<dbReference type="SUPFAM" id="SSF50465">
    <property type="entry name" value="EF-Tu/eEF-1alpha/eIF2-gamma C-terminal domain"/>
    <property type="match status" value="1"/>
</dbReference>
<dbReference type="SUPFAM" id="SSF52540">
    <property type="entry name" value="P-loop containing nucleoside triphosphate hydrolases"/>
    <property type="match status" value="1"/>
</dbReference>
<dbReference type="SUPFAM" id="SSF50447">
    <property type="entry name" value="Translation proteins"/>
    <property type="match status" value="1"/>
</dbReference>
<dbReference type="PROSITE" id="PS00301">
    <property type="entry name" value="G_TR_1"/>
    <property type="match status" value="1"/>
</dbReference>
<dbReference type="PROSITE" id="PS51722">
    <property type="entry name" value="G_TR_2"/>
    <property type="match status" value="1"/>
</dbReference>